<reference key="1">
    <citation type="submission" date="2007-03" db="EMBL/GenBank/DDBJ databases">
        <authorList>
            <person name="Heidelberg J."/>
        </authorList>
    </citation>
    <scope>NUCLEOTIDE SEQUENCE [LARGE SCALE GENOMIC DNA]</scope>
    <source>
        <strain>ATCC 39541 / Classical Ogawa 395 / O395</strain>
    </source>
</reference>
<reference key="2">
    <citation type="journal article" date="2008" name="PLoS ONE">
        <title>A recalibrated molecular clock and independent origins for the cholera pandemic clones.</title>
        <authorList>
            <person name="Feng L."/>
            <person name="Reeves P.R."/>
            <person name="Lan R."/>
            <person name="Ren Y."/>
            <person name="Gao C."/>
            <person name="Zhou Z."/>
            <person name="Ren Y."/>
            <person name="Cheng J."/>
            <person name="Wang W."/>
            <person name="Wang J."/>
            <person name="Qian W."/>
            <person name="Li D."/>
            <person name="Wang L."/>
        </authorList>
    </citation>
    <scope>NUCLEOTIDE SEQUENCE [LARGE SCALE GENOMIC DNA]</scope>
    <source>
        <strain>ATCC 39541 / Classical Ogawa 395 / O395</strain>
    </source>
</reference>
<feature type="chain" id="PRO_1000073712" description="Isoleucine--tRNA ligase">
    <location>
        <begin position="1"/>
        <end position="949"/>
    </location>
</feature>
<feature type="short sequence motif" description="'HIGH' region">
    <location>
        <begin position="58"/>
        <end position="68"/>
    </location>
</feature>
<feature type="short sequence motif" description="'KMSKS' region">
    <location>
        <begin position="608"/>
        <end position="612"/>
    </location>
</feature>
<feature type="binding site" evidence="1">
    <location>
        <position position="567"/>
    </location>
    <ligand>
        <name>L-isoleucyl-5'-AMP</name>
        <dbReference type="ChEBI" id="CHEBI:178002"/>
    </ligand>
</feature>
<feature type="binding site" evidence="1">
    <location>
        <position position="611"/>
    </location>
    <ligand>
        <name>ATP</name>
        <dbReference type="ChEBI" id="CHEBI:30616"/>
    </ligand>
</feature>
<feature type="binding site" evidence="1">
    <location>
        <position position="912"/>
    </location>
    <ligand>
        <name>Zn(2+)</name>
        <dbReference type="ChEBI" id="CHEBI:29105"/>
    </ligand>
</feature>
<feature type="binding site" evidence="1">
    <location>
        <position position="915"/>
    </location>
    <ligand>
        <name>Zn(2+)</name>
        <dbReference type="ChEBI" id="CHEBI:29105"/>
    </ligand>
</feature>
<feature type="binding site" evidence="1">
    <location>
        <position position="932"/>
    </location>
    <ligand>
        <name>Zn(2+)</name>
        <dbReference type="ChEBI" id="CHEBI:29105"/>
    </ligand>
</feature>
<feature type="binding site" evidence="1">
    <location>
        <position position="935"/>
    </location>
    <ligand>
        <name>Zn(2+)</name>
        <dbReference type="ChEBI" id="CHEBI:29105"/>
    </ligand>
</feature>
<name>SYI_VIBC3</name>
<proteinExistence type="inferred from homology"/>
<evidence type="ECO:0000255" key="1">
    <source>
        <dbReference type="HAMAP-Rule" id="MF_02002"/>
    </source>
</evidence>
<gene>
    <name evidence="1" type="primary">ileS</name>
    <name type="ordered locus">VC0395_A0214</name>
    <name type="ordered locus">VC395_0699</name>
</gene>
<protein>
    <recommendedName>
        <fullName evidence="1">Isoleucine--tRNA ligase</fullName>
        <ecNumber evidence="1">6.1.1.5</ecNumber>
    </recommendedName>
    <alternativeName>
        <fullName evidence="1">Isoleucyl-tRNA synthetase</fullName>
        <shortName evidence="1">IleRS</shortName>
    </alternativeName>
</protein>
<comment type="function">
    <text evidence="1">Catalyzes the attachment of isoleucine to tRNA(Ile). As IleRS can inadvertently accommodate and process structurally similar amino acids such as valine, to avoid such errors it has two additional distinct tRNA(Ile)-dependent editing activities. One activity is designated as 'pretransfer' editing and involves the hydrolysis of activated Val-AMP. The other activity is designated 'posttransfer' editing and involves deacylation of mischarged Val-tRNA(Ile).</text>
</comment>
<comment type="catalytic activity">
    <reaction evidence="1">
        <text>tRNA(Ile) + L-isoleucine + ATP = L-isoleucyl-tRNA(Ile) + AMP + diphosphate</text>
        <dbReference type="Rhea" id="RHEA:11060"/>
        <dbReference type="Rhea" id="RHEA-COMP:9666"/>
        <dbReference type="Rhea" id="RHEA-COMP:9695"/>
        <dbReference type="ChEBI" id="CHEBI:30616"/>
        <dbReference type="ChEBI" id="CHEBI:33019"/>
        <dbReference type="ChEBI" id="CHEBI:58045"/>
        <dbReference type="ChEBI" id="CHEBI:78442"/>
        <dbReference type="ChEBI" id="CHEBI:78528"/>
        <dbReference type="ChEBI" id="CHEBI:456215"/>
        <dbReference type="EC" id="6.1.1.5"/>
    </reaction>
</comment>
<comment type="cofactor">
    <cofactor evidence="1">
        <name>Zn(2+)</name>
        <dbReference type="ChEBI" id="CHEBI:29105"/>
    </cofactor>
    <text evidence="1">Binds 1 zinc ion per subunit.</text>
</comment>
<comment type="subunit">
    <text evidence="1">Monomer.</text>
</comment>
<comment type="subcellular location">
    <subcellularLocation>
        <location evidence="1">Cytoplasm</location>
    </subcellularLocation>
</comment>
<comment type="domain">
    <text evidence="1">IleRS has two distinct active sites: one for aminoacylation and one for editing. The misactivated valine is translocated from the active site to the editing site, which sterically excludes the correctly activated isoleucine. The single editing site contains two valyl binding pockets, one specific for each substrate (Val-AMP or Val-tRNA(Ile)).</text>
</comment>
<comment type="similarity">
    <text evidence="1">Belongs to the class-I aminoacyl-tRNA synthetase family. IleS type 1 subfamily.</text>
</comment>
<organism>
    <name type="scientific">Vibrio cholerae serotype O1 (strain ATCC 39541 / Classical Ogawa 395 / O395)</name>
    <dbReference type="NCBI Taxonomy" id="345073"/>
    <lineage>
        <taxon>Bacteria</taxon>
        <taxon>Pseudomonadati</taxon>
        <taxon>Pseudomonadota</taxon>
        <taxon>Gammaproteobacteria</taxon>
        <taxon>Vibrionales</taxon>
        <taxon>Vibrionaceae</taxon>
        <taxon>Vibrio</taxon>
    </lineage>
</organism>
<sequence>MSEYKDTLNLPETGFPMRGDLAKREPEMLQRWYQEDLYGAIRQAKKGKKSFVLHDGPPYANGDIHIGHALNKILKDVIIKSKTLSGFDAPYIPGWDCHGLPIELMVEKKVGKPGQKVTAAEFREKCREYAAGQVEGQKESFKRLGILGEWDKPYRTMDFVTEANIIRALGKIADNGHLLKGFKPVHWCTDCGSALAEAEVEYKNKVSPSIDVRFKAADEAAVLAKFGLAAGHEGKGDVSIVIWTTTPWTLPANRAVCLRADLEYVLIQVEGEQPERIIVASELAKSVMDRAGIEHFHNLGFATGADLELVQFQHPFYSFTVPAILGDHVTTDSGTGVVHTAPGHGQEDFAVGQQYGLEVANPVGSNGVYLPDTELFAGQHVFKANDSVLEVLKEKGALLHHHAYEHSYPHCWRHKTPIIFRATPQWFVSMEQAGLREQALTAIKGVHWMPDWGQSRIEGMVAGRPEWCISRQRTWGVPIALFVHKETAELHPNSADLIEKVAQLVEQKGIQAWWDLDTAELLGAEDAANYEKVLDTLDVWFDSGVTHSAVVDARQEFNGAEADMYLEGSDQHRGWFQSSLISSVAMKSKAPYKEVLTHGFVVDGQGRKMSKSIGNVVAPQDVTNKLGADILRLWVASTDYTGEVAVSDEILKRSADAYRRIRNTARFFLANLNGFNPTTDIIPVEDMVALDRWAVGRALAAQQEIIQAYQDYNLHAVVQRLMNFCSIEMGSFYLDVIKDRQYTAKRGGHAQRSCQTALFFIVEALVRWMAPIMSFTADEIWNAMPAQQADGSARDKFVFTTEWFDGLFGLAEGEELNNAFWNDIQKVRGSVNKLLENARNEKLIGGSLQAELVLFADDALASKLAKLGDELRFVLLTSKAVVKPLAEKSEAAQATDIDGLFVQVNKTEAEKCDRCWHHTPDVGTIAGHTTICGRCVSNVEGEGEVRKFA</sequence>
<keyword id="KW-0030">Aminoacyl-tRNA synthetase</keyword>
<keyword id="KW-0067">ATP-binding</keyword>
<keyword id="KW-0963">Cytoplasm</keyword>
<keyword id="KW-0436">Ligase</keyword>
<keyword id="KW-0479">Metal-binding</keyword>
<keyword id="KW-0547">Nucleotide-binding</keyword>
<keyword id="KW-0648">Protein biosynthesis</keyword>
<keyword id="KW-0862">Zinc</keyword>
<accession>A5F8Z3</accession>
<accession>C3LXZ3</accession>
<dbReference type="EC" id="6.1.1.5" evidence="1"/>
<dbReference type="EMBL" id="CP000627">
    <property type="protein sequence ID" value="ABQ21661.1"/>
    <property type="molecule type" value="Genomic_DNA"/>
</dbReference>
<dbReference type="EMBL" id="CP001235">
    <property type="protein sequence ID" value="ACP08717.1"/>
    <property type="molecule type" value="Genomic_DNA"/>
</dbReference>
<dbReference type="RefSeq" id="WP_000006091.1">
    <property type="nucleotide sequence ID" value="NZ_JAACZH010000006.1"/>
</dbReference>
<dbReference type="SMR" id="A5F8Z3"/>
<dbReference type="KEGG" id="vco:VC0395_A0214"/>
<dbReference type="KEGG" id="vcr:VC395_0699"/>
<dbReference type="PATRIC" id="fig|345073.21.peg.681"/>
<dbReference type="eggNOG" id="COG0060">
    <property type="taxonomic scope" value="Bacteria"/>
</dbReference>
<dbReference type="HOGENOM" id="CLU_001493_7_0_6"/>
<dbReference type="OrthoDB" id="9810365at2"/>
<dbReference type="Proteomes" id="UP000000249">
    <property type="component" value="Chromosome 2"/>
</dbReference>
<dbReference type="GO" id="GO:0005829">
    <property type="term" value="C:cytosol"/>
    <property type="evidence" value="ECO:0007669"/>
    <property type="project" value="TreeGrafter"/>
</dbReference>
<dbReference type="GO" id="GO:0002161">
    <property type="term" value="F:aminoacyl-tRNA deacylase activity"/>
    <property type="evidence" value="ECO:0007669"/>
    <property type="project" value="InterPro"/>
</dbReference>
<dbReference type="GO" id="GO:0005524">
    <property type="term" value="F:ATP binding"/>
    <property type="evidence" value="ECO:0007669"/>
    <property type="project" value="UniProtKB-UniRule"/>
</dbReference>
<dbReference type="GO" id="GO:0004822">
    <property type="term" value="F:isoleucine-tRNA ligase activity"/>
    <property type="evidence" value="ECO:0007669"/>
    <property type="project" value="UniProtKB-UniRule"/>
</dbReference>
<dbReference type="GO" id="GO:0000049">
    <property type="term" value="F:tRNA binding"/>
    <property type="evidence" value="ECO:0007669"/>
    <property type="project" value="InterPro"/>
</dbReference>
<dbReference type="GO" id="GO:0008270">
    <property type="term" value="F:zinc ion binding"/>
    <property type="evidence" value="ECO:0007669"/>
    <property type="project" value="UniProtKB-UniRule"/>
</dbReference>
<dbReference type="GO" id="GO:0006428">
    <property type="term" value="P:isoleucyl-tRNA aminoacylation"/>
    <property type="evidence" value="ECO:0007669"/>
    <property type="project" value="UniProtKB-UniRule"/>
</dbReference>
<dbReference type="CDD" id="cd07960">
    <property type="entry name" value="Anticodon_Ia_Ile_BEm"/>
    <property type="match status" value="1"/>
</dbReference>
<dbReference type="CDD" id="cd00818">
    <property type="entry name" value="IleRS_core"/>
    <property type="match status" value="1"/>
</dbReference>
<dbReference type="FunFam" id="1.10.730.20:FF:000001">
    <property type="entry name" value="Isoleucine--tRNA ligase"/>
    <property type="match status" value="1"/>
</dbReference>
<dbReference type="FunFam" id="3.40.50.620:FF:000048">
    <property type="entry name" value="Isoleucine--tRNA ligase"/>
    <property type="match status" value="1"/>
</dbReference>
<dbReference type="FunFam" id="3.40.50.620:FF:000168">
    <property type="entry name" value="Isoleucine--tRNA ligase"/>
    <property type="match status" value="1"/>
</dbReference>
<dbReference type="Gene3D" id="1.10.730.20">
    <property type="match status" value="1"/>
</dbReference>
<dbReference type="Gene3D" id="3.40.50.620">
    <property type="entry name" value="HUPs"/>
    <property type="match status" value="2"/>
</dbReference>
<dbReference type="Gene3D" id="1.10.10.830">
    <property type="entry name" value="Ile-tRNA synthetase CP2 domain-like"/>
    <property type="match status" value="1"/>
</dbReference>
<dbReference type="HAMAP" id="MF_02002">
    <property type="entry name" value="Ile_tRNA_synth_type1"/>
    <property type="match status" value="1"/>
</dbReference>
<dbReference type="InterPro" id="IPR001412">
    <property type="entry name" value="aa-tRNA-synth_I_CS"/>
</dbReference>
<dbReference type="InterPro" id="IPR002300">
    <property type="entry name" value="aa-tRNA-synth_Ia"/>
</dbReference>
<dbReference type="InterPro" id="IPR033708">
    <property type="entry name" value="Anticodon_Ile_BEm"/>
</dbReference>
<dbReference type="InterPro" id="IPR002301">
    <property type="entry name" value="Ile-tRNA-ligase"/>
</dbReference>
<dbReference type="InterPro" id="IPR023585">
    <property type="entry name" value="Ile-tRNA-ligase_type1"/>
</dbReference>
<dbReference type="InterPro" id="IPR050081">
    <property type="entry name" value="Ile-tRNA_ligase"/>
</dbReference>
<dbReference type="InterPro" id="IPR013155">
    <property type="entry name" value="M/V/L/I-tRNA-synth_anticd-bd"/>
</dbReference>
<dbReference type="InterPro" id="IPR014729">
    <property type="entry name" value="Rossmann-like_a/b/a_fold"/>
</dbReference>
<dbReference type="InterPro" id="IPR009080">
    <property type="entry name" value="tRNAsynth_Ia_anticodon-bd"/>
</dbReference>
<dbReference type="InterPro" id="IPR009008">
    <property type="entry name" value="Val/Leu/Ile-tRNA-synth_edit"/>
</dbReference>
<dbReference type="InterPro" id="IPR010663">
    <property type="entry name" value="Znf_FPG/IleRS"/>
</dbReference>
<dbReference type="NCBIfam" id="TIGR00392">
    <property type="entry name" value="ileS"/>
    <property type="match status" value="1"/>
</dbReference>
<dbReference type="PANTHER" id="PTHR42765:SF1">
    <property type="entry name" value="ISOLEUCINE--TRNA LIGASE, MITOCHONDRIAL"/>
    <property type="match status" value="1"/>
</dbReference>
<dbReference type="PANTHER" id="PTHR42765">
    <property type="entry name" value="SOLEUCYL-TRNA SYNTHETASE"/>
    <property type="match status" value="1"/>
</dbReference>
<dbReference type="Pfam" id="PF08264">
    <property type="entry name" value="Anticodon_1"/>
    <property type="match status" value="1"/>
</dbReference>
<dbReference type="Pfam" id="PF00133">
    <property type="entry name" value="tRNA-synt_1"/>
    <property type="match status" value="1"/>
</dbReference>
<dbReference type="Pfam" id="PF06827">
    <property type="entry name" value="zf-FPG_IleRS"/>
    <property type="match status" value="1"/>
</dbReference>
<dbReference type="PRINTS" id="PR00984">
    <property type="entry name" value="TRNASYNTHILE"/>
</dbReference>
<dbReference type="SUPFAM" id="SSF47323">
    <property type="entry name" value="Anticodon-binding domain of a subclass of class I aminoacyl-tRNA synthetases"/>
    <property type="match status" value="1"/>
</dbReference>
<dbReference type="SUPFAM" id="SSF52374">
    <property type="entry name" value="Nucleotidylyl transferase"/>
    <property type="match status" value="1"/>
</dbReference>
<dbReference type="SUPFAM" id="SSF50677">
    <property type="entry name" value="ValRS/IleRS/LeuRS editing domain"/>
    <property type="match status" value="1"/>
</dbReference>
<dbReference type="PROSITE" id="PS00178">
    <property type="entry name" value="AA_TRNA_LIGASE_I"/>
    <property type="match status" value="1"/>
</dbReference>